<evidence type="ECO:0000256" key="1">
    <source>
        <dbReference type="SAM" id="MobiDB-lite"/>
    </source>
</evidence>
<evidence type="ECO:0000269" key="2">
    <source>
    </source>
</evidence>
<evidence type="ECO:0000305" key="3"/>
<evidence type="ECO:0000312" key="4">
    <source>
        <dbReference type="HGNC" id="HGNC:31426"/>
    </source>
</evidence>
<dbReference type="EMBL" id="AK093587">
    <property type="protein sequence ID" value="BAC04202.1"/>
    <property type="status" value="ALT_INIT"/>
    <property type="molecule type" value="mRNA"/>
</dbReference>
<dbReference type="EMBL" id="AK124899">
    <property type="protein sequence ID" value="BAC85986.1"/>
    <property type="molecule type" value="mRNA"/>
</dbReference>
<dbReference type="EMBL" id="AL807752">
    <property type="status" value="NOT_ANNOTATED_CDS"/>
    <property type="molecule type" value="Genomic_DNA"/>
</dbReference>
<dbReference type="EMBL" id="BC132809">
    <property type="protein sequence ID" value="AAI32810.1"/>
    <property type="molecule type" value="mRNA"/>
</dbReference>
<dbReference type="EMBL" id="BC136839">
    <property type="protein sequence ID" value="AAI36840.1"/>
    <property type="molecule type" value="mRNA"/>
</dbReference>
<dbReference type="RefSeq" id="NP_997394.1">
    <property type="nucleotide sequence ID" value="NM_207511.2"/>
</dbReference>
<dbReference type="RefSeq" id="XP_016870206.1">
    <property type="nucleotide sequence ID" value="XM_017014717.1"/>
</dbReference>
<dbReference type="BioGRID" id="135152">
    <property type="interactions" value="4"/>
</dbReference>
<dbReference type="FunCoup" id="Q6ZV77">
    <property type="interactions" value="3"/>
</dbReference>
<dbReference type="IntAct" id="Q6ZV77">
    <property type="interactions" value="4"/>
</dbReference>
<dbReference type="iPTMnet" id="Q6ZV77"/>
<dbReference type="PhosphoSitePlus" id="Q6ZV77"/>
<dbReference type="BioMuta" id="HGNC:31426"/>
<dbReference type="DMDM" id="74749689"/>
<dbReference type="PaxDb" id="9606-ENSP00000318119"/>
<dbReference type="DNASU" id="401563"/>
<dbReference type="AGR" id="HGNC:31426"/>
<dbReference type="DisGeNET" id="401563"/>
<dbReference type="GeneCards" id="LINC02908"/>
<dbReference type="HGNC" id="HGNC:31426">
    <property type="gene designation" value="LINC02908"/>
</dbReference>
<dbReference type="neXtProt" id="NX_Q6ZV77"/>
<dbReference type="eggNOG" id="ENOG502RVJ3">
    <property type="taxonomic scope" value="Eukaryota"/>
</dbReference>
<dbReference type="InParanoid" id="Q6ZV77"/>
<dbReference type="PAN-GO" id="Q6ZV77">
    <property type="GO annotations" value="0 GO annotations based on evolutionary models"/>
</dbReference>
<dbReference type="PathwayCommons" id="Q6ZV77"/>
<dbReference type="SignaLink" id="Q6ZV77"/>
<dbReference type="BioGRID-ORCS" id="401563">
    <property type="hits" value="8 hits in 746 CRISPR screens"/>
</dbReference>
<dbReference type="GenomeRNAi" id="401563"/>
<dbReference type="Pharos" id="Q6ZV77">
    <property type="development level" value="Tdark"/>
</dbReference>
<dbReference type="Proteomes" id="UP000005640">
    <property type="component" value="Unplaced"/>
</dbReference>
<dbReference type="RNAct" id="Q6ZV77">
    <property type="molecule type" value="protein"/>
</dbReference>
<sequence length="190" mass="20001">MALRGHPEPQPTNTPLSATVGGPISLFTQPRCHSAARDLVWSQAWPDPDVLEISMQTPGGSSCRKEAVLPRLRVTRPLVPEPAILPVCAARLAGSLATDLSRSHSLLPPWVDLKEPPPPSAPSLLLEDPGQGGCHGAQSCVGTCELANGARGFCPEMGQNESLSEERKGHESKRKSGGRGSPSSHPTQAS</sequence>
<name>CI139_HUMAN</name>
<feature type="chain" id="PRO_0000284491" description="Putative uncharacterized protein LINC02908">
    <location>
        <begin position="1"/>
        <end position="190"/>
    </location>
</feature>
<feature type="region of interest" description="Disordered" evidence="1">
    <location>
        <begin position="1"/>
        <end position="21"/>
    </location>
</feature>
<feature type="region of interest" description="Disordered" evidence="1">
    <location>
        <begin position="155"/>
        <end position="190"/>
    </location>
</feature>
<feature type="compositionally biased region" description="Low complexity" evidence="1">
    <location>
        <begin position="181"/>
        <end position="190"/>
    </location>
</feature>
<feature type="sequence variant" id="VAR_031749" description="In dbSNP:rs12337910." evidence="2">
    <original>K</original>
    <variation>E</variation>
    <location>
        <position position="168"/>
    </location>
</feature>
<feature type="sequence conflict" description="In Ref. 1; BAC04202." evidence="3" ref="1">
    <original>Q</original>
    <variation>R</variation>
    <location>
        <position position="131"/>
    </location>
</feature>
<comment type="caution">
    <text evidence="3">Product of a dubious gene prediction.</text>
</comment>
<comment type="sequence caution" evidence="3">
    <conflict type="erroneous initiation">
        <sequence resource="EMBL-CDS" id="BAC04202"/>
    </conflict>
    <text>Truncated N-terminus.</text>
</comment>
<reference key="1">
    <citation type="journal article" date="2004" name="Nat. Genet.">
        <title>Complete sequencing and characterization of 21,243 full-length human cDNAs.</title>
        <authorList>
            <person name="Ota T."/>
            <person name="Suzuki Y."/>
            <person name="Nishikawa T."/>
            <person name="Otsuki T."/>
            <person name="Sugiyama T."/>
            <person name="Irie R."/>
            <person name="Wakamatsu A."/>
            <person name="Hayashi K."/>
            <person name="Sato H."/>
            <person name="Nagai K."/>
            <person name="Kimura K."/>
            <person name="Makita H."/>
            <person name="Sekine M."/>
            <person name="Obayashi M."/>
            <person name="Nishi T."/>
            <person name="Shibahara T."/>
            <person name="Tanaka T."/>
            <person name="Ishii S."/>
            <person name="Yamamoto J."/>
            <person name="Saito K."/>
            <person name="Kawai Y."/>
            <person name="Isono Y."/>
            <person name="Nakamura Y."/>
            <person name="Nagahari K."/>
            <person name="Murakami K."/>
            <person name="Yasuda T."/>
            <person name="Iwayanagi T."/>
            <person name="Wagatsuma M."/>
            <person name="Shiratori A."/>
            <person name="Sudo H."/>
            <person name="Hosoiri T."/>
            <person name="Kaku Y."/>
            <person name="Kodaira H."/>
            <person name="Kondo H."/>
            <person name="Sugawara M."/>
            <person name="Takahashi M."/>
            <person name="Kanda K."/>
            <person name="Yokoi T."/>
            <person name="Furuya T."/>
            <person name="Kikkawa E."/>
            <person name="Omura Y."/>
            <person name="Abe K."/>
            <person name="Kamihara K."/>
            <person name="Katsuta N."/>
            <person name="Sato K."/>
            <person name="Tanikawa M."/>
            <person name="Yamazaki M."/>
            <person name="Ninomiya K."/>
            <person name="Ishibashi T."/>
            <person name="Yamashita H."/>
            <person name="Murakawa K."/>
            <person name="Fujimori K."/>
            <person name="Tanai H."/>
            <person name="Kimata M."/>
            <person name="Watanabe M."/>
            <person name="Hiraoka S."/>
            <person name="Chiba Y."/>
            <person name="Ishida S."/>
            <person name="Ono Y."/>
            <person name="Takiguchi S."/>
            <person name="Watanabe S."/>
            <person name="Yosida M."/>
            <person name="Hotuta T."/>
            <person name="Kusano J."/>
            <person name="Kanehori K."/>
            <person name="Takahashi-Fujii A."/>
            <person name="Hara H."/>
            <person name="Tanase T.-O."/>
            <person name="Nomura Y."/>
            <person name="Togiya S."/>
            <person name="Komai F."/>
            <person name="Hara R."/>
            <person name="Takeuchi K."/>
            <person name="Arita M."/>
            <person name="Imose N."/>
            <person name="Musashino K."/>
            <person name="Yuuki H."/>
            <person name="Oshima A."/>
            <person name="Sasaki N."/>
            <person name="Aotsuka S."/>
            <person name="Yoshikawa Y."/>
            <person name="Matsunawa H."/>
            <person name="Ichihara T."/>
            <person name="Shiohata N."/>
            <person name="Sano S."/>
            <person name="Moriya S."/>
            <person name="Momiyama H."/>
            <person name="Satoh N."/>
            <person name="Takami S."/>
            <person name="Terashima Y."/>
            <person name="Suzuki O."/>
            <person name="Nakagawa S."/>
            <person name="Senoh A."/>
            <person name="Mizoguchi H."/>
            <person name="Goto Y."/>
            <person name="Shimizu F."/>
            <person name="Wakebe H."/>
            <person name="Hishigaki H."/>
            <person name="Watanabe T."/>
            <person name="Sugiyama A."/>
            <person name="Takemoto M."/>
            <person name="Kawakami B."/>
            <person name="Yamazaki M."/>
            <person name="Watanabe K."/>
            <person name="Kumagai A."/>
            <person name="Itakura S."/>
            <person name="Fukuzumi Y."/>
            <person name="Fujimori Y."/>
            <person name="Komiyama M."/>
            <person name="Tashiro H."/>
            <person name="Tanigami A."/>
            <person name="Fujiwara T."/>
            <person name="Ono T."/>
            <person name="Yamada K."/>
            <person name="Fujii Y."/>
            <person name="Ozaki K."/>
            <person name="Hirao M."/>
            <person name="Ohmori Y."/>
            <person name="Kawabata A."/>
            <person name="Hikiji T."/>
            <person name="Kobatake N."/>
            <person name="Inagaki H."/>
            <person name="Ikema Y."/>
            <person name="Okamoto S."/>
            <person name="Okitani R."/>
            <person name="Kawakami T."/>
            <person name="Noguchi S."/>
            <person name="Itoh T."/>
            <person name="Shigeta K."/>
            <person name="Senba T."/>
            <person name="Matsumura K."/>
            <person name="Nakajima Y."/>
            <person name="Mizuno T."/>
            <person name="Morinaga M."/>
            <person name="Sasaki M."/>
            <person name="Togashi T."/>
            <person name="Oyama M."/>
            <person name="Hata H."/>
            <person name="Watanabe M."/>
            <person name="Komatsu T."/>
            <person name="Mizushima-Sugano J."/>
            <person name="Satoh T."/>
            <person name="Shirai Y."/>
            <person name="Takahashi Y."/>
            <person name="Nakagawa K."/>
            <person name="Okumura K."/>
            <person name="Nagase T."/>
            <person name="Nomura N."/>
            <person name="Kikuchi H."/>
            <person name="Masuho Y."/>
            <person name="Yamashita R."/>
            <person name="Nakai K."/>
            <person name="Yada T."/>
            <person name="Nakamura Y."/>
            <person name="Ohara O."/>
            <person name="Isogai T."/>
            <person name="Sugano S."/>
        </authorList>
    </citation>
    <scope>NUCLEOTIDE SEQUENCE [LARGE SCALE MRNA]</scope>
    <source>
        <tissue>Hippocampus</tissue>
        <tissue>Thymus</tissue>
    </source>
</reference>
<reference key="2">
    <citation type="journal article" date="2004" name="Nature">
        <title>DNA sequence and analysis of human chromosome 9.</title>
        <authorList>
            <person name="Humphray S.J."/>
            <person name="Oliver K."/>
            <person name="Hunt A.R."/>
            <person name="Plumb R.W."/>
            <person name="Loveland J.E."/>
            <person name="Howe K.L."/>
            <person name="Andrews T.D."/>
            <person name="Searle S."/>
            <person name="Hunt S.E."/>
            <person name="Scott C.E."/>
            <person name="Jones M.C."/>
            <person name="Ainscough R."/>
            <person name="Almeida J.P."/>
            <person name="Ambrose K.D."/>
            <person name="Ashwell R.I.S."/>
            <person name="Babbage A.K."/>
            <person name="Babbage S."/>
            <person name="Bagguley C.L."/>
            <person name="Bailey J."/>
            <person name="Banerjee R."/>
            <person name="Barker D.J."/>
            <person name="Barlow K.F."/>
            <person name="Bates K."/>
            <person name="Beasley H."/>
            <person name="Beasley O."/>
            <person name="Bird C.P."/>
            <person name="Bray-Allen S."/>
            <person name="Brown A.J."/>
            <person name="Brown J.Y."/>
            <person name="Burford D."/>
            <person name="Burrill W."/>
            <person name="Burton J."/>
            <person name="Carder C."/>
            <person name="Carter N.P."/>
            <person name="Chapman J.C."/>
            <person name="Chen Y."/>
            <person name="Clarke G."/>
            <person name="Clark S.Y."/>
            <person name="Clee C.M."/>
            <person name="Clegg S."/>
            <person name="Collier R.E."/>
            <person name="Corby N."/>
            <person name="Crosier M."/>
            <person name="Cummings A.T."/>
            <person name="Davies J."/>
            <person name="Dhami P."/>
            <person name="Dunn M."/>
            <person name="Dutta I."/>
            <person name="Dyer L.W."/>
            <person name="Earthrowl M.E."/>
            <person name="Faulkner L."/>
            <person name="Fleming C.J."/>
            <person name="Frankish A."/>
            <person name="Frankland J.A."/>
            <person name="French L."/>
            <person name="Fricker D.G."/>
            <person name="Garner P."/>
            <person name="Garnett J."/>
            <person name="Ghori J."/>
            <person name="Gilbert J.G.R."/>
            <person name="Glison C."/>
            <person name="Grafham D.V."/>
            <person name="Gribble S."/>
            <person name="Griffiths C."/>
            <person name="Griffiths-Jones S."/>
            <person name="Grocock R."/>
            <person name="Guy J."/>
            <person name="Hall R.E."/>
            <person name="Hammond S."/>
            <person name="Harley J.L."/>
            <person name="Harrison E.S.I."/>
            <person name="Hart E.A."/>
            <person name="Heath P.D."/>
            <person name="Henderson C.D."/>
            <person name="Hopkins B.L."/>
            <person name="Howard P.J."/>
            <person name="Howden P.J."/>
            <person name="Huckle E."/>
            <person name="Johnson C."/>
            <person name="Johnson D."/>
            <person name="Joy A.A."/>
            <person name="Kay M."/>
            <person name="Keenan S."/>
            <person name="Kershaw J.K."/>
            <person name="Kimberley A.M."/>
            <person name="King A."/>
            <person name="Knights A."/>
            <person name="Laird G.K."/>
            <person name="Langford C."/>
            <person name="Lawlor S."/>
            <person name="Leongamornlert D.A."/>
            <person name="Leversha M."/>
            <person name="Lloyd C."/>
            <person name="Lloyd D.M."/>
            <person name="Lovell J."/>
            <person name="Martin S."/>
            <person name="Mashreghi-Mohammadi M."/>
            <person name="Matthews L."/>
            <person name="McLaren S."/>
            <person name="McLay K.E."/>
            <person name="McMurray A."/>
            <person name="Milne S."/>
            <person name="Nickerson T."/>
            <person name="Nisbett J."/>
            <person name="Nordsiek G."/>
            <person name="Pearce A.V."/>
            <person name="Peck A.I."/>
            <person name="Porter K.M."/>
            <person name="Pandian R."/>
            <person name="Pelan S."/>
            <person name="Phillimore B."/>
            <person name="Povey S."/>
            <person name="Ramsey Y."/>
            <person name="Rand V."/>
            <person name="Scharfe M."/>
            <person name="Sehra H.K."/>
            <person name="Shownkeen R."/>
            <person name="Sims S.K."/>
            <person name="Skuce C.D."/>
            <person name="Smith M."/>
            <person name="Steward C.A."/>
            <person name="Swarbreck D."/>
            <person name="Sycamore N."/>
            <person name="Tester J."/>
            <person name="Thorpe A."/>
            <person name="Tracey A."/>
            <person name="Tromans A."/>
            <person name="Thomas D.W."/>
            <person name="Wall M."/>
            <person name="Wallis J.M."/>
            <person name="West A.P."/>
            <person name="Whitehead S.L."/>
            <person name="Willey D.L."/>
            <person name="Williams S.A."/>
            <person name="Wilming L."/>
            <person name="Wray P.W."/>
            <person name="Young L."/>
            <person name="Ashurst J.L."/>
            <person name="Coulson A."/>
            <person name="Blocker H."/>
            <person name="Durbin R.M."/>
            <person name="Sulston J.E."/>
            <person name="Hubbard T."/>
            <person name="Jackson M.J."/>
            <person name="Bentley D.R."/>
            <person name="Beck S."/>
            <person name="Rogers J."/>
            <person name="Dunham I."/>
        </authorList>
    </citation>
    <scope>NUCLEOTIDE SEQUENCE [LARGE SCALE GENOMIC DNA]</scope>
</reference>
<reference key="3">
    <citation type="journal article" date="2004" name="Genome Res.">
        <title>The status, quality, and expansion of the NIH full-length cDNA project: the Mammalian Gene Collection (MGC).</title>
        <authorList>
            <consortium name="The MGC Project Team"/>
        </authorList>
    </citation>
    <scope>NUCLEOTIDE SEQUENCE [LARGE SCALE MRNA]</scope>
    <scope>VARIANT GLU-168</scope>
    <source>
        <tissue>Brain</tissue>
        <tissue>Testis</tissue>
    </source>
</reference>
<protein>
    <recommendedName>
        <fullName evidence="3">Putative uncharacterized protein LINC02908</fullName>
    </recommendedName>
    <alternativeName>
        <fullName evidence="4">Long intergenic non-protein coding RNA 2908</fullName>
    </alternativeName>
</protein>
<accession>Q6ZV77</accession>
<accession>A2RUA3</accession>
<accession>B9EGW2</accession>
<accession>Q5SPY0</accession>
<accession>Q8N224</accession>
<gene>
    <name evidence="4" type="primary">LINC02908</name>
    <name evidence="4" type="synonym">C9orf139</name>
</gene>
<proteinExistence type="uncertain"/>
<organism>
    <name type="scientific">Homo sapiens</name>
    <name type="common">Human</name>
    <dbReference type="NCBI Taxonomy" id="9606"/>
    <lineage>
        <taxon>Eukaryota</taxon>
        <taxon>Metazoa</taxon>
        <taxon>Chordata</taxon>
        <taxon>Craniata</taxon>
        <taxon>Vertebrata</taxon>
        <taxon>Euteleostomi</taxon>
        <taxon>Mammalia</taxon>
        <taxon>Eutheria</taxon>
        <taxon>Euarchontoglires</taxon>
        <taxon>Primates</taxon>
        <taxon>Haplorrhini</taxon>
        <taxon>Catarrhini</taxon>
        <taxon>Hominidae</taxon>
        <taxon>Homo</taxon>
    </lineage>
</organism>
<keyword id="KW-1185">Reference proteome</keyword>